<keyword id="KW-0030">Aminoacyl-tRNA synthetase</keyword>
<keyword id="KW-0067">ATP-binding</keyword>
<keyword id="KW-0963">Cytoplasm</keyword>
<keyword id="KW-0436">Ligase</keyword>
<keyword id="KW-0479">Metal-binding</keyword>
<keyword id="KW-0547">Nucleotide-binding</keyword>
<keyword id="KW-0648">Protein biosynthesis</keyword>
<keyword id="KW-0862">Zinc</keyword>
<protein>
    <recommendedName>
        <fullName evidence="1">Isoleucine--tRNA ligase</fullName>
        <ecNumber evidence="1">6.1.1.5</ecNumber>
    </recommendedName>
    <alternativeName>
        <fullName evidence="1">Isoleucyl-tRNA synthetase</fullName>
        <shortName evidence="1">IleRS</shortName>
    </alternativeName>
</protein>
<proteinExistence type="inferred from homology"/>
<reference key="1">
    <citation type="journal article" date="2007" name="BMC Microbiol.">
        <title>Subtle genetic changes enhance virulence of methicillin resistant and sensitive Staphylococcus aureus.</title>
        <authorList>
            <person name="Highlander S.K."/>
            <person name="Hulten K.G."/>
            <person name="Qin X."/>
            <person name="Jiang H."/>
            <person name="Yerrapragada S."/>
            <person name="Mason E.O. Jr."/>
            <person name="Shang Y."/>
            <person name="Williams T.M."/>
            <person name="Fortunov R.M."/>
            <person name="Liu Y."/>
            <person name="Igboeli O."/>
            <person name="Petrosino J."/>
            <person name="Tirumalai M."/>
            <person name="Uzman A."/>
            <person name="Fox G.E."/>
            <person name="Cardenas A.M."/>
            <person name="Muzny D.M."/>
            <person name="Hemphill L."/>
            <person name="Ding Y."/>
            <person name="Dugan S."/>
            <person name="Blyth P.R."/>
            <person name="Buhay C.J."/>
            <person name="Dinh H.H."/>
            <person name="Hawes A.C."/>
            <person name="Holder M."/>
            <person name="Kovar C.L."/>
            <person name="Lee S.L."/>
            <person name="Liu W."/>
            <person name="Nazareth L.V."/>
            <person name="Wang Q."/>
            <person name="Zhou J."/>
            <person name="Kaplan S.L."/>
            <person name="Weinstock G.M."/>
        </authorList>
    </citation>
    <scope>NUCLEOTIDE SEQUENCE [LARGE SCALE GENOMIC DNA]</scope>
    <source>
        <strain>USA300 / TCH1516</strain>
    </source>
</reference>
<accession>A8Z3N1</accession>
<gene>
    <name evidence="1" type="primary">ileS</name>
    <name type="ordered locus">USA300HOU_1130</name>
</gene>
<evidence type="ECO:0000255" key="1">
    <source>
        <dbReference type="HAMAP-Rule" id="MF_02002"/>
    </source>
</evidence>
<organism>
    <name type="scientific">Staphylococcus aureus (strain USA300 / TCH1516)</name>
    <dbReference type="NCBI Taxonomy" id="451516"/>
    <lineage>
        <taxon>Bacteria</taxon>
        <taxon>Bacillati</taxon>
        <taxon>Bacillota</taxon>
        <taxon>Bacilli</taxon>
        <taxon>Bacillales</taxon>
        <taxon>Staphylococcaceae</taxon>
        <taxon>Staphylococcus</taxon>
    </lineage>
</organism>
<sequence length="917" mass="104886">MDYKETLLMPKTDFPMRGGLPNKEPQIQEKWDAEDQYHKALEKNKGNETFILHDGPPYANGNLHMGHALNKILKDFIVRYKTMQGFYAPYVPGWDTHGLPIEQALTKKGVDRKKMSTAEFREKCKEFALEQIELQKKDFRRLGVRGDFNDPYITLKPEYEAAQIRIFGEMADKGLIYKGKKPVYWSPSSESSLAEAEIEYHDKRSASIYVAFDVKDDKGVVDADAKFIIWTTTPWTIPSNVAITVHPELKYGQYNVNGEKYIIAEALSDAVAEALDWDKASIKLEKEYTGKELEYVVAQHPFLDRESLVINGDHVTTDAGTGCVHTAPGHGEDDYIVGQKYELPVISPIDDKGVFTEEGGQFEGMFYDKANKAVTDLLTEKGALLKLDFITHSYPHDWRTKKPVIFRATPQWFASISKVRQDILDAIENTNFKVNWGKTRIYNMVRDRGEWVISRQRVWGVPLPVFYAENGEIIMTKETVNHVADLFAEHGSNIWFEREAKDLLPEGFTHPGSPNGTFTKETDIMDVWFDSGSSHRGVLETRPELSFPADMYLEGSDQYRGWFNSSITTSVATRGVSPYKFLLSHGFVMDGEGKKMSKSLGNVIVPDQVVKQKGADIARLWVSSTDYLADVRISDEILKQTSDVYRKIRNTLRFMLGNINDFNPDTDSIPESELLEVDRYLLNRLREFTASTINNYENFDYLNIYQEVQNFINVELSNFYLDYGKDILYIEQRDSHIRRSMQTVLYQILVDMTKLLAPILVHTAEEVWSHTPHVKEESVHLADMPKVVEVDQALLDKWRTFMNLRDDVNRALETARNEKVIGKSLEAKVTIASNDKFNASEFLTSFDALHQLFIVSQVKVVDKLDDQATAYEHGDIVIEHADGEKCERCWNYSEDLGAVDELTHLCPRCQQVVKSLV</sequence>
<name>SYI_STAAT</name>
<dbReference type="EC" id="6.1.1.5" evidence="1"/>
<dbReference type="EMBL" id="CP000730">
    <property type="protein sequence ID" value="ABX29147.1"/>
    <property type="molecule type" value="Genomic_DNA"/>
</dbReference>
<dbReference type="RefSeq" id="WP_000384691.1">
    <property type="nucleotide sequence ID" value="NC_010079.1"/>
</dbReference>
<dbReference type="SMR" id="A8Z3N1"/>
<dbReference type="KEGG" id="sax:USA300HOU_1130"/>
<dbReference type="HOGENOM" id="CLU_001493_7_1_9"/>
<dbReference type="GO" id="GO:0005829">
    <property type="term" value="C:cytosol"/>
    <property type="evidence" value="ECO:0007669"/>
    <property type="project" value="TreeGrafter"/>
</dbReference>
<dbReference type="GO" id="GO:0002161">
    <property type="term" value="F:aminoacyl-tRNA deacylase activity"/>
    <property type="evidence" value="ECO:0007669"/>
    <property type="project" value="InterPro"/>
</dbReference>
<dbReference type="GO" id="GO:0005524">
    <property type="term" value="F:ATP binding"/>
    <property type="evidence" value="ECO:0007669"/>
    <property type="project" value="UniProtKB-UniRule"/>
</dbReference>
<dbReference type="GO" id="GO:0004822">
    <property type="term" value="F:isoleucine-tRNA ligase activity"/>
    <property type="evidence" value="ECO:0007669"/>
    <property type="project" value="UniProtKB-UniRule"/>
</dbReference>
<dbReference type="GO" id="GO:0000049">
    <property type="term" value="F:tRNA binding"/>
    <property type="evidence" value="ECO:0007669"/>
    <property type="project" value="InterPro"/>
</dbReference>
<dbReference type="GO" id="GO:0008270">
    <property type="term" value="F:zinc ion binding"/>
    <property type="evidence" value="ECO:0007669"/>
    <property type="project" value="UniProtKB-UniRule"/>
</dbReference>
<dbReference type="GO" id="GO:0006428">
    <property type="term" value="P:isoleucyl-tRNA aminoacylation"/>
    <property type="evidence" value="ECO:0007669"/>
    <property type="project" value="UniProtKB-UniRule"/>
</dbReference>
<dbReference type="CDD" id="cd07960">
    <property type="entry name" value="Anticodon_Ia_Ile_BEm"/>
    <property type="match status" value="1"/>
</dbReference>
<dbReference type="CDD" id="cd00818">
    <property type="entry name" value="IleRS_core"/>
    <property type="match status" value="1"/>
</dbReference>
<dbReference type="FunFam" id="1.10.10.830:FF:000001">
    <property type="entry name" value="Isoleucine--tRNA ligase"/>
    <property type="match status" value="1"/>
</dbReference>
<dbReference type="FunFam" id="1.10.730.20:FF:000001">
    <property type="entry name" value="Isoleucine--tRNA ligase"/>
    <property type="match status" value="1"/>
</dbReference>
<dbReference type="FunFam" id="3.40.50.620:FF:000152">
    <property type="entry name" value="Isoleucine--tRNA ligase"/>
    <property type="match status" value="1"/>
</dbReference>
<dbReference type="FunFam" id="3.90.740.10:FF:000006">
    <property type="entry name" value="Isoleucine--tRNA ligase"/>
    <property type="match status" value="1"/>
</dbReference>
<dbReference type="Gene3D" id="1.10.730.20">
    <property type="match status" value="1"/>
</dbReference>
<dbReference type="Gene3D" id="3.40.50.620">
    <property type="entry name" value="HUPs"/>
    <property type="match status" value="2"/>
</dbReference>
<dbReference type="Gene3D" id="1.10.10.830">
    <property type="entry name" value="Ile-tRNA synthetase CP2 domain-like"/>
    <property type="match status" value="1"/>
</dbReference>
<dbReference type="HAMAP" id="MF_02002">
    <property type="entry name" value="Ile_tRNA_synth_type1"/>
    <property type="match status" value="1"/>
</dbReference>
<dbReference type="InterPro" id="IPR001412">
    <property type="entry name" value="aa-tRNA-synth_I_CS"/>
</dbReference>
<dbReference type="InterPro" id="IPR002300">
    <property type="entry name" value="aa-tRNA-synth_Ia"/>
</dbReference>
<dbReference type="InterPro" id="IPR033708">
    <property type="entry name" value="Anticodon_Ile_BEm"/>
</dbReference>
<dbReference type="InterPro" id="IPR002301">
    <property type="entry name" value="Ile-tRNA-ligase"/>
</dbReference>
<dbReference type="InterPro" id="IPR023585">
    <property type="entry name" value="Ile-tRNA-ligase_type1"/>
</dbReference>
<dbReference type="InterPro" id="IPR050081">
    <property type="entry name" value="Ile-tRNA_ligase"/>
</dbReference>
<dbReference type="InterPro" id="IPR013155">
    <property type="entry name" value="M/V/L/I-tRNA-synth_anticd-bd"/>
</dbReference>
<dbReference type="InterPro" id="IPR014729">
    <property type="entry name" value="Rossmann-like_a/b/a_fold"/>
</dbReference>
<dbReference type="InterPro" id="IPR009080">
    <property type="entry name" value="tRNAsynth_Ia_anticodon-bd"/>
</dbReference>
<dbReference type="InterPro" id="IPR009008">
    <property type="entry name" value="Val/Leu/Ile-tRNA-synth_edit"/>
</dbReference>
<dbReference type="InterPro" id="IPR010663">
    <property type="entry name" value="Znf_FPG/IleRS"/>
</dbReference>
<dbReference type="NCBIfam" id="TIGR00392">
    <property type="entry name" value="ileS"/>
    <property type="match status" value="1"/>
</dbReference>
<dbReference type="PANTHER" id="PTHR42765:SF1">
    <property type="entry name" value="ISOLEUCINE--TRNA LIGASE, MITOCHONDRIAL"/>
    <property type="match status" value="1"/>
</dbReference>
<dbReference type="PANTHER" id="PTHR42765">
    <property type="entry name" value="SOLEUCYL-TRNA SYNTHETASE"/>
    <property type="match status" value="1"/>
</dbReference>
<dbReference type="Pfam" id="PF08264">
    <property type="entry name" value="Anticodon_1"/>
    <property type="match status" value="1"/>
</dbReference>
<dbReference type="Pfam" id="PF00133">
    <property type="entry name" value="tRNA-synt_1"/>
    <property type="match status" value="1"/>
</dbReference>
<dbReference type="Pfam" id="PF06827">
    <property type="entry name" value="zf-FPG_IleRS"/>
    <property type="match status" value="1"/>
</dbReference>
<dbReference type="PRINTS" id="PR00984">
    <property type="entry name" value="TRNASYNTHILE"/>
</dbReference>
<dbReference type="SUPFAM" id="SSF47323">
    <property type="entry name" value="Anticodon-binding domain of a subclass of class I aminoacyl-tRNA synthetases"/>
    <property type="match status" value="1"/>
</dbReference>
<dbReference type="SUPFAM" id="SSF52374">
    <property type="entry name" value="Nucleotidylyl transferase"/>
    <property type="match status" value="1"/>
</dbReference>
<dbReference type="SUPFAM" id="SSF50677">
    <property type="entry name" value="ValRS/IleRS/LeuRS editing domain"/>
    <property type="match status" value="1"/>
</dbReference>
<dbReference type="PROSITE" id="PS00178">
    <property type="entry name" value="AA_TRNA_LIGASE_I"/>
    <property type="match status" value="1"/>
</dbReference>
<feature type="chain" id="PRO_1000088559" description="Isoleucine--tRNA ligase">
    <location>
        <begin position="1"/>
        <end position="917"/>
    </location>
</feature>
<feature type="short sequence motif" description="'HIGH' region">
    <location>
        <begin position="57"/>
        <end position="67"/>
    </location>
</feature>
<feature type="short sequence motif" description="'KMSKS' region">
    <location>
        <begin position="595"/>
        <end position="599"/>
    </location>
</feature>
<feature type="binding site" evidence="1">
    <location>
        <position position="554"/>
    </location>
    <ligand>
        <name>L-isoleucyl-5'-AMP</name>
        <dbReference type="ChEBI" id="CHEBI:178002"/>
    </ligand>
</feature>
<feature type="binding site" evidence="1">
    <location>
        <position position="598"/>
    </location>
    <ligand>
        <name>ATP</name>
        <dbReference type="ChEBI" id="CHEBI:30616"/>
    </ligand>
</feature>
<feature type="binding site" evidence="1">
    <location>
        <position position="886"/>
    </location>
    <ligand>
        <name>Zn(2+)</name>
        <dbReference type="ChEBI" id="CHEBI:29105"/>
    </ligand>
</feature>
<feature type="binding site" evidence="1">
    <location>
        <position position="889"/>
    </location>
    <ligand>
        <name>Zn(2+)</name>
        <dbReference type="ChEBI" id="CHEBI:29105"/>
    </ligand>
</feature>
<feature type="binding site" evidence="1">
    <location>
        <position position="906"/>
    </location>
    <ligand>
        <name>Zn(2+)</name>
        <dbReference type="ChEBI" id="CHEBI:29105"/>
    </ligand>
</feature>
<feature type="binding site" evidence="1">
    <location>
        <position position="909"/>
    </location>
    <ligand>
        <name>Zn(2+)</name>
        <dbReference type="ChEBI" id="CHEBI:29105"/>
    </ligand>
</feature>
<comment type="function">
    <text evidence="1">Catalyzes the attachment of isoleucine to tRNA(Ile). As IleRS can inadvertently accommodate and process structurally similar amino acids such as valine, to avoid such errors it has two additional distinct tRNA(Ile)-dependent editing activities. One activity is designated as 'pretransfer' editing and involves the hydrolysis of activated Val-AMP. The other activity is designated 'posttransfer' editing and involves deacylation of mischarged Val-tRNA(Ile).</text>
</comment>
<comment type="catalytic activity">
    <reaction evidence="1">
        <text>tRNA(Ile) + L-isoleucine + ATP = L-isoleucyl-tRNA(Ile) + AMP + diphosphate</text>
        <dbReference type="Rhea" id="RHEA:11060"/>
        <dbReference type="Rhea" id="RHEA-COMP:9666"/>
        <dbReference type="Rhea" id="RHEA-COMP:9695"/>
        <dbReference type="ChEBI" id="CHEBI:30616"/>
        <dbReference type="ChEBI" id="CHEBI:33019"/>
        <dbReference type="ChEBI" id="CHEBI:58045"/>
        <dbReference type="ChEBI" id="CHEBI:78442"/>
        <dbReference type="ChEBI" id="CHEBI:78528"/>
        <dbReference type="ChEBI" id="CHEBI:456215"/>
        <dbReference type="EC" id="6.1.1.5"/>
    </reaction>
</comment>
<comment type="cofactor">
    <cofactor evidence="1">
        <name>Zn(2+)</name>
        <dbReference type="ChEBI" id="CHEBI:29105"/>
    </cofactor>
    <text evidence="1">Binds 1 zinc ion per subunit.</text>
</comment>
<comment type="subunit">
    <text evidence="1">Monomer.</text>
</comment>
<comment type="subcellular location">
    <subcellularLocation>
        <location evidence="1">Cytoplasm</location>
    </subcellularLocation>
</comment>
<comment type="domain">
    <text evidence="1">IleRS has two distinct active sites: one for aminoacylation and one for editing. The misactivated valine is translocated from the active site to the editing site, which sterically excludes the correctly activated isoleucine. The single editing site contains two valyl binding pockets, one specific for each substrate (Val-AMP or Val-tRNA(Ile)).</text>
</comment>
<comment type="similarity">
    <text evidence="1">Belongs to the class-I aminoacyl-tRNA synthetase family. IleS type 1 subfamily.</text>
</comment>